<proteinExistence type="inferred from homology"/>
<reference key="1">
    <citation type="journal article" date="1999" name="DNA Res.">
        <title>Complete genome sequence of an aerobic hyper-thermophilic crenarchaeon, Aeropyrum pernix K1.</title>
        <authorList>
            <person name="Kawarabayasi Y."/>
            <person name="Hino Y."/>
            <person name="Horikawa H."/>
            <person name="Yamazaki S."/>
            <person name="Haikawa Y."/>
            <person name="Jin-no K."/>
            <person name="Takahashi M."/>
            <person name="Sekine M."/>
            <person name="Baba S."/>
            <person name="Ankai A."/>
            <person name="Kosugi H."/>
            <person name="Hosoyama A."/>
            <person name="Fukui S."/>
            <person name="Nagai Y."/>
            <person name="Nishijima K."/>
            <person name="Nakazawa H."/>
            <person name="Takamiya M."/>
            <person name="Masuda S."/>
            <person name="Funahashi T."/>
            <person name="Tanaka T."/>
            <person name="Kudoh Y."/>
            <person name="Yamazaki J."/>
            <person name="Kushida N."/>
            <person name="Oguchi A."/>
            <person name="Aoki K."/>
            <person name="Kubota K."/>
            <person name="Nakamura Y."/>
            <person name="Nomura N."/>
            <person name="Sako Y."/>
            <person name="Kikuchi H."/>
        </authorList>
    </citation>
    <scope>NUCLEOTIDE SEQUENCE [LARGE SCALE GENOMIC DNA]</scope>
    <source>
        <strain>ATCC 700893 / DSM 11879 / JCM 9820 / NBRC 100138 / K1</strain>
    </source>
</reference>
<keyword id="KW-1185">Reference proteome</keyword>
<keyword id="KW-0687">Ribonucleoprotein</keyword>
<keyword id="KW-0689">Ribosomal protein</keyword>
<sequence>MVRGGIRDTWRLKKWFKVVAPPLFGETVLGTTPADDPDKLIGRVMETTLFDITGDYSYVHVKMYFQVVRVEGDTAYTRFKGHELLRDYIRGLTRRKSSKVTGIFNVWTKDGYGLRVTAMAFTRQRCKTSQKSAIRKVMQEIVEQKARESTLDELIQLMVFSDHEGSLAYLIDESARKIYPLRKVEIAKSKLLWVPGPNGPEKAVVVSPLQLKVT</sequence>
<gene>
    <name evidence="1" type="primary">rps3ae</name>
    <name type="ordered locus">APE_1154.1</name>
</gene>
<organism>
    <name type="scientific">Aeropyrum pernix (strain ATCC 700893 / DSM 11879 / JCM 9820 / NBRC 100138 / K1)</name>
    <dbReference type="NCBI Taxonomy" id="272557"/>
    <lineage>
        <taxon>Archaea</taxon>
        <taxon>Thermoproteota</taxon>
        <taxon>Thermoprotei</taxon>
        <taxon>Desulfurococcales</taxon>
        <taxon>Desulfurococcaceae</taxon>
        <taxon>Aeropyrum</taxon>
    </lineage>
</organism>
<comment type="similarity">
    <text evidence="1">Belongs to the eukaryotic ribosomal protein eS1 family.</text>
</comment>
<dbReference type="EMBL" id="BA000002">
    <property type="protein sequence ID" value="BAA80139.2"/>
    <property type="molecule type" value="Genomic_DNA"/>
</dbReference>
<dbReference type="PIR" id="E72585">
    <property type="entry name" value="E72585"/>
</dbReference>
<dbReference type="RefSeq" id="WP_010866194.1">
    <property type="nucleotide sequence ID" value="NC_000854.2"/>
</dbReference>
<dbReference type="SMR" id="Q9YCV8"/>
<dbReference type="STRING" id="272557.APE_1154.1"/>
<dbReference type="EnsemblBacteria" id="BAA80139">
    <property type="protein sequence ID" value="BAA80139"/>
    <property type="gene ID" value="APE_1154.1"/>
</dbReference>
<dbReference type="GeneID" id="1445821"/>
<dbReference type="KEGG" id="ape:APE_1154.1"/>
<dbReference type="PATRIC" id="fig|272557.25.peg.796"/>
<dbReference type="eggNOG" id="arCOG04186">
    <property type="taxonomic scope" value="Archaea"/>
</dbReference>
<dbReference type="Proteomes" id="UP000002518">
    <property type="component" value="Chromosome"/>
</dbReference>
<dbReference type="GO" id="GO:1990904">
    <property type="term" value="C:ribonucleoprotein complex"/>
    <property type="evidence" value="ECO:0007669"/>
    <property type="project" value="UniProtKB-KW"/>
</dbReference>
<dbReference type="GO" id="GO:0005840">
    <property type="term" value="C:ribosome"/>
    <property type="evidence" value="ECO:0007669"/>
    <property type="project" value="UniProtKB-KW"/>
</dbReference>
<dbReference type="GO" id="GO:0003735">
    <property type="term" value="F:structural constituent of ribosome"/>
    <property type="evidence" value="ECO:0007669"/>
    <property type="project" value="InterPro"/>
</dbReference>
<dbReference type="GO" id="GO:0006412">
    <property type="term" value="P:translation"/>
    <property type="evidence" value="ECO:0007669"/>
    <property type="project" value="UniProtKB-UniRule"/>
</dbReference>
<dbReference type="HAMAP" id="MF_00359">
    <property type="entry name" value="Ribosomal_eS1"/>
    <property type="match status" value="1"/>
</dbReference>
<dbReference type="InterPro" id="IPR001593">
    <property type="entry name" value="Ribosomal_eS1"/>
</dbReference>
<dbReference type="InterPro" id="IPR030838">
    <property type="entry name" value="Ribosomal_eS1_arc"/>
</dbReference>
<dbReference type="InterPro" id="IPR018281">
    <property type="entry name" value="Ribosomal_eS1_CS"/>
</dbReference>
<dbReference type="NCBIfam" id="NF003142">
    <property type="entry name" value="PRK04057.1"/>
    <property type="match status" value="1"/>
</dbReference>
<dbReference type="Pfam" id="PF01015">
    <property type="entry name" value="Ribosomal_S3Ae"/>
    <property type="match status" value="1"/>
</dbReference>
<dbReference type="SMART" id="SM01397">
    <property type="entry name" value="Ribosomal_S3Ae"/>
    <property type="match status" value="1"/>
</dbReference>
<dbReference type="PROSITE" id="PS01191">
    <property type="entry name" value="RIBOSOMAL_S3AE"/>
    <property type="match status" value="1"/>
</dbReference>
<name>RS3A_AERPE</name>
<evidence type="ECO:0000255" key="1">
    <source>
        <dbReference type="HAMAP-Rule" id="MF_00359"/>
    </source>
</evidence>
<evidence type="ECO:0000305" key="2"/>
<feature type="chain" id="PRO_0000153543" description="Small ribosomal subunit protein eS1">
    <location>
        <begin position="1"/>
        <end position="214"/>
    </location>
</feature>
<accession>Q9YCV8</accession>
<protein>
    <recommendedName>
        <fullName evidence="1">Small ribosomal subunit protein eS1</fullName>
    </recommendedName>
    <alternativeName>
        <fullName evidence="2">30S ribosomal protein S3Ae</fullName>
    </alternativeName>
    <alternativeName>
        <fullName evidence="1">Ribosomal protein S1e</fullName>
    </alternativeName>
</protein>